<feature type="propeptide" id="PRO_0000443755" evidence="5">
    <location>
        <begin position="1"/>
        <end position="10"/>
    </location>
</feature>
<feature type="peptide" id="PRO_0000443756" description="Toxin MSD1" evidence="5">
    <location>
        <begin position="11"/>
        <end position="18"/>
    </location>
</feature>
<feature type="propeptide" id="PRO_0000443757" evidence="5">
    <location>
        <begin position="19"/>
        <end position="32"/>
    </location>
</feature>
<feature type="cross-link" description="Cyclopeptide (Ile-Pro)" evidence="5">
    <location>
        <begin position="11"/>
        <end position="18"/>
    </location>
</feature>
<evidence type="ECO:0000250" key="1">
    <source>
        <dbReference type="UniProtKB" id="A0A067SLB9"/>
    </source>
</evidence>
<evidence type="ECO:0000269" key="2">
    <source>
    </source>
</evidence>
<evidence type="ECO:0000303" key="3">
    <source>
    </source>
</evidence>
<evidence type="ECO:0000305" key="4"/>
<evidence type="ECO:0000305" key="5">
    <source>
    </source>
</evidence>
<organism>
    <name type="scientific">Amanita exitialis</name>
    <name type="common">Guangzhou destroying angel</name>
    <dbReference type="NCBI Taxonomy" id="262245"/>
    <lineage>
        <taxon>Eukaryota</taxon>
        <taxon>Fungi</taxon>
        <taxon>Dikarya</taxon>
        <taxon>Basidiomycota</taxon>
        <taxon>Agaricomycotina</taxon>
        <taxon>Agaricomycetes</taxon>
        <taxon>Agaricomycetidae</taxon>
        <taxon>Agaricales</taxon>
        <taxon>Pluteineae</taxon>
        <taxon>Amanitaceae</taxon>
        <taxon>Amanita</taxon>
    </lineage>
</organism>
<accession>U5L3X0</accession>
<name>MSD1_AMAEX</name>
<comment type="function">
    <text evidence="5">Probable toxin that belongs to the MSDIN-like toxin family responsible for a large number of food poisoning cases and deaths (PubMed:24050899).</text>
</comment>
<comment type="tissue specificity">
    <text evidence="2">Expressed in basidiocarps (PubMed:24050899).</text>
</comment>
<comment type="PTM">
    <text evidence="1">Processed by the macrocyclase-peptidase enzyme POPB to yield a toxic cyclic octapeptide (By similarity). POPB first removes 10 residues from the N-terminus (By similarity). Conformational trapping of the remaining peptide forces the enzyme to release this intermediate rather than proceed to macrocyclization (By similarity). The enzyme rebinds the remaining peptide in a different conformation and catalyzes macrocyclization of the N-terminal 8 residues (By similarity).</text>
</comment>
<comment type="similarity">
    <text evidence="4">Belongs to the MSDIN fungal toxin family.</text>
</comment>
<reference key="1">
    <citation type="journal article" date="2013" name="Gene">
        <title>Illumina-based de novo transcriptome sequencing and analysis of Amanita exitialis basidiocarps.</title>
        <authorList>
            <person name="Li P."/>
            <person name="Deng W.Q."/>
            <person name="Li T.H."/>
            <person name="Song B."/>
            <person name="Shen Y.H."/>
        </authorList>
    </citation>
    <scope>NUCLEOTIDE SEQUENCE [MRNA]</scope>
    <scope>FUNCTION</scope>
    <scope>TISSUE SPECIFICITY</scope>
</reference>
<protein>
    <recommendedName>
        <fullName evidence="3">MSDIN-like toxin proprotein 1</fullName>
    </recommendedName>
    <component>
        <recommendedName>
            <fullName evidence="3">Toxin MSD1</fullName>
        </recommendedName>
    </component>
</protein>
<sequence>MSDINATRLPIFWFIYFPCVSDVDSTLTRGER</sequence>
<proteinExistence type="evidence at transcript level"/>
<dbReference type="EMBL" id="KF387480">
    <property type="protein sequence ID" value="AGW83704.1"/>
    <property type="molecule type" value="mRNA"/>
</dbReference>
<dbReference type="EMBL" id="KF387490">
    <property type="protein sequence ID" value="AGW83714.1"/>
    <property type="molecule type" value="mRNA"/>
</dbReference>
<dbReference type="SMR" id="U5L3X0"/>
<dbReference type="GO" id="GO:0090729">
    <property type="term" value="F:toxin activity"/>
    <property type="evidence" value="ECO:0007669"/>
    <property type="project" value="UniProtKB-KW"/>
</dbReference>
<dbReference type="InterPro" id="IPR027582">
    <property type="entry name" value="Amanitin/phalloidin"/>
</dbReference>
<dbReference type="NCBIfam" id="TIGR04309">
    <property type="entry name" value="amanitin"/>
    <property type="match status" value="1"/>
</dbReference>
<keyword id="KW-0800">Toxin</keyword>